<proteinExistence type="inferred from homology"/>
<gene>
    <name evidence="1" type="primary">pqqC</name>
    <name type="ordered locus">PSEEN0396</name>
</gene>
<comment type="function">
    <text evidence="1">Ring cyclization and eight-electron oxidation of 3a-(2-amino-2-carboxyethyl)-4,5-dioxo-4,5,6,7,8,9-hexahydroquinoline-7,9-dicarboxylic-acid to PQQ.</text>
</comment>
<comment type="catalytic activity">
    <reaction evidence="1">
        <text>6-(2-amino-2-carboxyethyl)-7,8-dioxo-1,2,3,4,7,8-hexahydroquinoline-2,4-dicarboxylate + 3 O2 = pyrroloquinoline quinone + 2 H2O2 + 2 H2O + H(+)</text>
        <dbReference type="Rhea" id="RHEA:10692"/>
        <dbReference type="ChEBI" id="CHEBI:15377"/>
        <dbReference type="ChEBI" id="CHEBI:15378"/>
        <dbReference type="ChEBI" id="CHEBI:15379"/>
        <dbReference type="ChEBI" id="CHEBI:16240"/>
        <dbReference type="ChEBI" id="CHEBI:58442"/>
        <dbReference type="ChEBI" id="CHEBI:58778"/>
        <dbReference type="EC" id="1.3.3.11"/>
    </reaction>
</comment>
<comment type="pathway">
    <text evidence="1">Cofactor biosynthesis; pyrroloquinoline quinone biosynthesis.</text>
</comment>
<comment type="similarity">
    <text evidence="1">Belongs to the PqqC family.</text>
</comment>
<dbReference type="EC" id="1.3.3.11" evidence="1"/>
<dbReference type="EMBL" id="CT573326">
    <property type="protein sequence ID" value="CAK13355.1"/>
    <property type="molecule type" value="Genomic_DNA"/>
</dbReference>
<dbReference type="RefSeq" id="WP_011531814.1">
    <property type="nucleotide sequence ID" value="NC_008027.1"/>
</dbReference>
<dbReference type="SMR" id="Q1IG47"/>
<dbReference type="STRING" id="384676.PSEEN0396"/>
<dbReference type="GeneID" id="32803736"/>
<dbReference type="KEGG" id="pen:PSEEN0396"/>
<dbReference type="eggNOG" id="COG5424">
    <property type="taxonomic scope" value="Bacteria"/>
</dbReference>
<dbReference type="HOGENOM" id="CLU_080136_0_0_6"/>
<dbReference type="OrthoDB" id="9800756at2"/>
<dbReference type="UniPathway" id="UPA00539"/>
<dbReference type="Proteomes" id="UP000000658">
    <property type="component" value="Chromosome"/>
</dbReference>
<dbReference type="GO" id="GO:0033732">
    <property type="term" value="F:pyrroloquinoline-quinone synthase activity"/>
    <property type="evidence" value="ECO:0007669"/>
    <property type="project" value="UniProtKB-EC"/>
</dbReference>
<dbReference type="GO" id="GO:0018189">
    <property type="term" value="P:pyrroloquinoline quinone biosynthetic process"/>
    <property type="evidence" value="ECO:0007669"/>
    <property type="project" value="UniProtKB-UniRule"/>
</dbReference>
<dbReference type="GO" id="GO:0006790">
    <property type="term" value="P:sulfur compound metabolic process"/>
    <property type="evidence" value="ECO:0007669"/>
    <property type="project" value="UniProtKB-ARBA"/>
</dbReference>
<dbReference type="CDD" id="cd19370">
    <property type="entry name" value="TenA_PqqC"/>
    <property type="match status" value="1"/>
</dbReference>
<dbReference type="Gene3D" id="1.20.910.10">
    <property type="entry name" value="Heme oxygenase-like"/>
    <property type="match status" value="1"/>
</dbReference>
<dbReference type="HAMAP" id="MF_00654">
    <property type="entry name" value="PQQ_syn_PqqC"/>
    <property type="match status" value="1"/>
</dbReference>
<dbReference type="InterPro" id="IPR016084">
    <property type="entry name" value="Haem_Oase-like_multi-hlx"/>
</dbReference>
<dbReference type="InterPro" id="IPR011845">
    <property type="entry name" value="PqqC"/>
</dbReference>
<dbReference type="InterPro" id="IPR039068">
    <property type="entry name" value="PqqC-like"/>
</dbReference>
<dbReference type="InterPro" id="IPR004305">
    <property type="entry name" value="Thiaminase-2/PQQC"/>
</dbReference>
<dbReference type="NCBIfam" id="TIGR02111">
    <property type="entry name" value="PQQ_syn_pqqC"/>
    <property type="match status" value="1"/>
</dbReference>
<dbReference type="PANTHER" id="PTHR40279:SF3">
    <property type="entry name" value="4-AMINOBENZOATE SYNTHASE"/>
    <property type="match status" value="1"/>
</dbReference>
<dbReference type="PANTHER" id="PTHR40279">
    <property type="entry name" value="PQQC-LIKE PROTEIN"/>
    <property type="match status" value="1"/>
</dbReference>
<dbReference type="Pfam" id="PF03070">
    <property type="entry name" value="TENA_THI-4"/>
    <property type="match status" value="1"/>
</dbReference>
<dbReference type="SUPFAM" id="SSF48613">
    <property type="entry name" value="Heme oxygenase-like"/>
    <property type="match status" value="1"/>
</dbReference>
<accession>Q1IG47</accession>
<protein>
    <recommendedName>
        <fullName evidence="1">Pyrroloquinoline-quinone synthase</fullName>
        <ecNumber evidence="1">1.3.3.11</ecNumber>
    </recommendedName>
    <alternativeName>
        <fullName evidence="1">Coenzyme PQQ synthesis protein C</fullName>
    </alternativeName>
    <alternativeName>
        <fullName evidence="1">Pyrroloquinoline quinone biosynthesis protein C</fullName>
    </alternativeName>
</protein>
<keyword id="KW-0560">Oxidoreductase</keyword>
<keyword id="KW-0884">PQQ biosynthesis</keyword>
<feature type="chain" id="PRO_1000061673" description="Pyrroloquinoline-quinone synthase">
    <location>
        <begin position="1"/>
        <end position="251"/>
    </location>
</feature>
<sequence length="251" mass="28903">MNDAAPMSPAEFEQALRAKGAFYHIHHPYHVAMYEGRATREQIQGWVANRFYYQVNIPMKDAAILANCPDREVRREWVQRLLDHDGAPGEDGGIEAWLRLGQAVGLDPDQLRSQELVLPGVRFAVDAYVNFARRASWQEAASSSLTELFAPQIHQSRLDSWPQHYPWIDPAGYEYFRTRLGQARRDVEHGLAITLAHYTTREGQARMLEILQFKLDILWSMLDAMSMAYELNRPPYHSVTSERVWHKGIAL</sequence>
<evidence type="ECO:0000255" key="1">
    <source>
        <dbReference type="HAMAP-Rule" id="MF_00654"/>
    </source>
</evidence>
<organism>
    <name type="scientific">Pseudomonas entomophila (strain L48)</name>
    <dbReference type="NCBI Taxonomy" id="384676"/>
    <lineage>
        <taxon>Bacteria</taxon>
        <taxon>Pseudomonadati</taxon>
        <taxon>Pseudomonadota</taxon>
        <taxon>Gammaproteobacteria</taxon>
        <taxon>Pseudomonadales</taxon>
        <taxon>Pseudomonadaceae</taxon>
        <taxon>Pseudomonas</taxon>
    </lineage>
</organism>
<name>PQQC_PSEE4</name>
<reference key="1">
    <citation type="journal article" date="2006" name="Nat. Biotechnol.">
        <title>Complete genome sequence of the entomopathogenic and metabolically versatile soil bacterium Pseudomonas entomophila.</title>
        <authorList>
            <person name="Vodovar N."/>
            <person name="Vallenet D."/>
            <person name="Cruveiller S."/>
            <person name="Rouy Z."/>
            <person name="Barbe V."/>
            <person name="Acosta C."/>
            <person name="Cattolico L."/>
            <person name="Jubin C."/>
            <person name="Lajus A."/>
            <person name="Segurens B."/>
            <person name="Vacherie B."/>
            <person name="Wincker P."/>
            <person name="Weissenbach J."/>
            <person name="Lemaitre B."/>
            <person name="Medigue C."/>
            <person name="Boccard F."/>
        </authorList>
    </citation>
    <scope>NUCLEOTIDE SEQUENCE [LARGE SCALE GENOMIC DNA]</scope>
    <source>
        <strain>L48</strain>
    </source>
</reference>